<proteinExistence type="inferred from homology"/>
<evidence type="ECO:0000255" key="1">
    <source>
        <dbReference type="HAMAP-Rule" id="MF_00093"/>
    </source>
</evidence>
<evidence type="ECO:0000256" key="2">
    <source>
        <dbReference type="SAM" id="MobiDB-lite"/>
    </source>
</evidence>
<comment type="function">
    <text evidence="1">Peptide chain release factor 1 directs the termination of translation in response to the peptide chain termination codons UAG and UAA.</text>
</comment>
<comment type="subcellular location">
    <subcellularLocation>
        <location evidence="1">Cytoplasm</location>
    </subcellularLocation>
</comment>
<comment type="PTM">
    <text evidence="1">Methylated by PrmC. Methylation increases the termination efficiency of RF1.</text>
</comment>
<comment type="similarity">
    <text evidence="1">Belongs to the prokaryotic/mitochondrial release factor family.</text>
</comment>
<name>RF1_BORBZ</name>
<keyword id="KW-0963">Cytoplasm</keyword>
<keyword id="KW-0488">Methylation</keyword>
<keyword id="KW-0648">Protein biosynthesis</keyword>
<feature type="chain" id="PRO_1000117231" description="Peptide chain release factor 1">
    <location>
        <begin position="1"/>
        <end position="357"/>
    </location>
</feature>
<feature type="region of interest" description="Disordered" evidence="2">
    <location>
        <begin position="283"/>
        <end position="313"/>
    </location>
</feature>
<feature type="modified residue" description="N5-methylglutamine" evidence="1">
    <location>
        <position position="234"/>
    </location>
</feature>
<organism>
    <name type="scientific">Borreliella burgdorferi (strain ZS7)</name>
    <name type="common">Borrelia burgdorferi</name>
    <dbReference type="NCBI Taxonomy" id="445985"/>
    <lineage>
        <taxon>Bacteria</taxon>
        <taxon>Pseudomonadati</taxon>
        <taxon>Spirochaetota</taxon>
        <taxon>Spirochaetia</taxon>
        <taxon>Spirochaetales</taxon>
        <taxon>Borreliaceae</taxon>
        <taxon>Borreliella</taxon>
    </lineage>
</organism>
<protein>
    <recommendedName>
        <fullName evidence="1">Peptide chain release factor 1</fullName>
        <shortName evidence="1">RF-1</shortName>
    </recommendedName>
</protein>
<gene>
    <name evidence="1" type="primary">prfA</name>
    <name type="ordered locus">BbuZS7_0196</name>
</gene>
<accession>B7J1C9</accession>
<dbReference type="EMBL" id="CP001205">
    <property type="protein sequence ID" value="ACK74792.1"/>
    <property type="molecule type" value="Genomic_DNA"/>
</dbReference>
<dbReference type="RefSeq" id="WP_002656432.1">
    <property type="nucleotide sequence ID" value="NC_011728.1"/>
</dbReference>
<dbReference type="SMR" id="B7J1C9"/>
<dbReference type="GeneID" id="56567622"/>
<dbReference type="KEGG" id="bbz:BbuZS7_0196"/>
<dbReference type="HOGENOM" id="CLU_036856_0_1_12"/>
<dbReference type="Proteomes" id="UP000006901">
    <property type="component" value="Chromosome"/>
</dbReference>
<dbReference type="GO" id="GO:0005737">
    <property type="term" value="C:cytoplasm"/>
    <property type="evidence" value="ECO:0007669"/>
    <property type="project" value="UniProtKB-SubCell"/>
</dbReference>
<dbReference type="GO" id="GO:0016149">
    <property type="term" value="F:translation release factor activity, codon specific"/>
    <property type="evidence" value="ECO:0007669"/>
    <property type="project" value="UniProtKB-UniRule"/>
</dbReference>
<dbReference type="FunFam" id="3.30.160.20:FF:000004">
    <property type="entry name" value="Peptide chain release factor 1"/>
    <property type="match status" value="1"/>
</dbReference>
<dbReference type="FunFam" id="3.30.70.1660:FF:000002">
    <property type="entry name" value="Peptide chain release factor 1"/>
    <property type="match status" value="1"/>
</dbReference>
<dbReference type="FunFam" id="3.30.70.1660:FF:000004">
    <property type="entry name" value="Peptide chain release factor 1"/>
    <property type="match status" value="1"/>
</dbReference>
<dbReference type="Gene3D" id="3.30.160.20">
    <property type="match status" value="1"/>
</dbReference>
<dbReference type="Gene3D" id="3.30.70.1660">
    <property type="match status" value="2"/>
</dbReference>
<dbReference type="Gene3D" id="6.10.140.1950">
    <property type="match status" value="1"/>
</dbReference>
<dbReference type="HAMAP" id="MF_00093">
    <property type="entry name" value="Rel_fac_1"/>
    <property type="match status" value="1"/>
</dbReference>
<dbReference type="InterPro" id="IPR005139">
    <property type="entry name" value="PCRF"/>
</dbReference>
<dbReference type="InterPro" id="IPR000352">
    <property type="entry name" value="Pep_chain_release_fac_I"/>
</dbReference>
<dbReference type="InterPro" id="IPR045853">
    <property type="entry name" value="Pep_chain_release_fac_I_sf"/>
</dbReference>
<dbReference type="InterPro" id="IPR050057">
    <property type="entry name" value="Prokaryotic/Mito_RF"/>
</dbReference>
<dbReference type="InterPro" id="IPR004373">
    <property type="entry name" value="RF-1"/>
</dbReference>
<dbReference type="NCBIfam" id="TIGR00019">
    <property type="entry name" value="prfA"/>
    <property type="match status" value="1"/>
</dbReference>
<dbReference type="NCBIfam" id="NF001859">
    <property type="entry name" value="PRK00591.1"/>
    <property type="match status" value="1"/>
</dbReference>
<dbReference type="PANTHER" id="PTHR43804">
    <property type="entry name" value="LD18447P"/>
    <property type="match status" value="1"/>
</dbReference>
<dbReference type="PANTHER" id="PTHR43804:SF7">
    <property type="entry name" value="LD18447P"/>
    <property type="match status" value="1"/>
</dbReference>
<dbReference type="Pfam" id="PF03462">
    <property type="entry name" value="PCRF"/>
    <property type="match status" value="1"/>
</dbReference>
<dbReference type="Pfam" id="PF00472">
    <property type="entry name" value="RF-1"/>
    <property type="match status" value="1"/>
</dbReference>
<dbReference type="SMART" id="SM00937">
    <property type="entry name" value="PCRF"/>
    <property type="match status" value="1"/>
</dbReference>
<dbReference type="SUPFAM" id="SSF75620">
    <property type="entry name" value="Release factor"/>
    <property type="match status" value="1"/>
</dbReference>
<dbReference type="PROSITE" id="PS00745">
    <property type="entry name" value="RF_PROK_I"/>
    <property type="match status" value="1"/>
</dbReference>
<reference key="1">
    <citation type="journal article" date="2011" name="J. Bacteriol.">
        <title>Whole-genome sequences of thirteen isolates of Borrelia burgdorferi.</title>
        <authorList>
            <person name="Schutzer S.E."/>
            <person name="Fraser-Liggett C.M."/>
            <person name="Casjens S.R."/>
            <person name="Qiu W.G."/>
            <person name="Dunn J.J."/>
            <person name="Mongodin E.F."/>
            <person name="Luft B.J."/>
        </authorList>
    </citation>
    <scope>NUCLEOTIDE SEQUENCE [LARGE SCALE GENOMIC DNA]</scope>
    <source>
        <strain>ZS7</strain>
    </source>
</reference>
<sequence>MLLEKLNSATSKIKLIEEKLQDINLIKDQKKYSKIIKEYTYLEKINTKKIEYEKILSQINDTKTILEKEDQQEMKELIKQELIDLDKKKEDLEHQIKILLLPQDENDSKNIIIEIRAGTGGEEAALFANNLYSMYIKYSEKKKWKTEIINFNETELGGFKEIIFEIKGKDVFKKLKYESGVHRVQRIPITESNGRLQTSAATVAVLPNIEETEIDINEKDLRIDVYRSSGAGGQHVNTTDSAVRITHLPTGIVVQCQNERSQHKNKDQAMKILRARLYEFEDSKKQEQRSSNRKQQVGSGDRSERIRTYNFPQNRITDHRANITLYKLEEFMQGELDPLLDPLMIALQEQELKSNSI</sequence>